<accession>Q9BYN0</accession>
<accession>B2R543</accession>
<accession>Q8NDM3</accession>
<accession>Q96AK6</accession>
<gene>
    <name type="primary">SRXN1</name>
    <name type="synonym">C20orf139</name>
    <name type="synonym">SRX</name>
    <name type="synonym">SRX1</name>
</gene>
<name>SRXN1_HUMAN</name>
<comment type="function">
    <text evidence="3 4">Contributes to oxidative stress resistance by reducing cysteine-sulfinic acid formed under exposure to oxidants in the peroxiredoxins PRDX1, PRDX2, PRDX3 and PRDX4 (PubMed:15448164, PubMed:15590625). Does not act on PRDX5 or PRDX6 (PubMed:15448164, PubMed:15590625). May catalyze the reduction in a multi-step process by acting both as a specific phosphotransferase and a thioltransferase (PubMed:15448164, PubMed:15590625).</text>
</comment>
<comment type="catalytic activity">
    <reaction evidence="3 4">
        <text>S-hydroxy-S-oxy-L-cysteinyl-[peroxiredoxin] + [protein]-dithiol + ATP = S-hydroxy-L-cysteinyl-[peroxiredoxin] + [protein]-disulfide + ADP + phosphate</text>
        <dbReference type="Rhea" id="RHEA:17545"/>
        <dbReference type="Rhea" id="RHEA-COMP:10593"/>
        <dbReference type="Rhea" id="RHEA-COMP:10594"/>
        <dbReference type="Rhea" id="RHEA-COMP:13681"/>
        <dbReference type="Rhea" id="RHEA-COMP:17976"/>
        <dbReference type="ChEBI" id="CHEBI:29950"/>
        <dbReference type="ChEBI" id="CHEBI:30616"/>
        <dbReference type="ChEBI" id="CHEBI:43474"/>
        <dbReference type="ChEBI" id="CHEBI:50058"/>
        <dbReference type="ChEBI" id="CHEBI:61973"/>
        <dbReference type="ChEBI" id="CHEBI:61974"/>
        <dbReference type="ChEBI" id="CHEBI:456216"/>
        <dbReference type="EC" id="1.8.98.2"/>
    </reaction>
</comment>
<comment type="cofactor">
    <cofactor evidence="1">
        <name>Mg(2+)</name>
        <dbReference type="ChEBI" id="CHEBI:18420"/>
    </cofactor>
</comment>
<comment type="interaction">
    <interactant intactId="EBI-15678820">
        <id>Q9BYN0</id>
    </interactant>
    <interactant intactId="EBI-353193">
        <id>Q06830</id>
        <label>PRDX1</label>
    </interactant>
    <organismsDiffer>false</organismsDiffer>
    <experiments>3</experiments>
</comment>
<comment type="subcellular location">
    <subcellularLocation>
        <location evidence="3">Cytoplasm</location>
    </subcellularLocation>
</comment>
<comment type="tissue specificity">
    <text evidence="3">Widely expressed with highest levels in kidney, lung, spleen and thymus.</text>
</comment>
<comment type="similarity">
    <text evidence="6">Belongs to the sulfiredoxin family.</text>
</comment>
<comment type="online information" name="Atlas of Genetics and Cytogenetics in Oncology and Haematology">
    <link uri="https://atlasgeneticsoncology.org/gene/52295/SRXN1"/>
</comment>
<protein>
    <recommendedName>
        <fullName>Sulfiredoxin-1</fullName>
        <ecNumber evidence="3 4">1.8.98.2</ecNumber>
    </recommendedName>
</protein>
<dbReference type="EC" id="1.8.98.2" evidence="3 4"/>
<dbReference type="EMBL" id="AK312054">
    <property type="protein sequence ID" value="BAG34990.1"/>
    <property type="molecule type" value="mRNA"/>
</dbReference>
<dbReference type="EMBL" id="AL833944">
    <property type="protein sequence ID" value="CAD38799.1"/>
    <property type="molecule type" value="mRNA"/>
</dbReference>
<dbReference type="EMBL" id="AL121758">
    <property type="status" value="NOT_ANNOTATED_CDS"/>
    <property type="molecule type" value="Genomic_DNA"/>
</dbReference>
<dbReference type="EMBL" id="BC017001">
    <property type="protein sequence ID" value="AAH17001.1"/>
    <property type="molecule type" value="mRNA"/>
</dbReference>
<dbReference type="EMBL" id="BC032604">
    <property type="protein sequence ID" value="AAH32604.1"/>
    <property type="molecule type" value="mRNA"/>
</dbReference>
<dbReference type="EMBL" id="BC047707">
    <property type="protein sequence ID" value="AAH47707.1"/>
    <property type="molecule type" value="mRNA"/>
</dbReference>
<dbReference type="CCDS" id="CCDS13005.1"/>
<dbReference type="RefSeq" id="NP_542763.1">
    <property type="nucleotide sequence ID" value="NM_080725.3"/>
</dbReference>
<dbReference type="PDB" id="1XW3">
    <property type="method" value="X-ray"/>
    <property type="resolution" value="1.65 A"/>
    <property type="chains" value="A=32-137"/>
</dbReference>
<dbReference type="PDB" id="1XW4">
    <property type="method" value="X-ray"/>
    <property type="resolution" value="2.00 A"/>
    <property type="chains" value="X=32-137"/>
</dbReference>
<dbReference type="PDB" id="1YZS">
    <property type="method" value="NMR"/>
    <property type="chains" value="A=17-137"/>
</dbReference>
<dbReference type="PDB" id="2B6F">
    <property type="method" value="NMR"/>
    <property type="chains" value="A=17-137"/>
</dbReference>
<dbReference type="PDB" id="2RII">
    <property type="method" value="X-ray"/>
    <property type="resolution" value="2.60 A"/>
    <property type="chains" value="X/Y=32-137"/>
</dbReference>
<dbReference type="PDB" id="3CYI">
    <property type="method" value="X-ray"/>
    <property type="resolution" value="1.80 A"/>
    <property type="chains" value="A=32-137"/>
</dbReference>
<dbReference type="PDB" id="3HY2">
    <property type="method" value="X-ray"/>
    <property type="resolution" value="2.10 A"/>
    <property type="chains" value="X/Y=32-137"/>
</dbReference>
<dbReference type="PDB" id="7LJ1">
    <property type="method" value="X-ray"/>
    <property type="resolution" value="2.97 A"/>
    <property type="chains" value="a/b/c/d/e/f/g/h/i/j/k/l/m/n/o/p/q/r/s/t=32-137"/>
</dbReference>
<dbReference type="PDBsum" id="1XW3"/>
<dbReference type="PDBsum" id="1XW4"/>
<dbReference type="PDBsum" id="1YZS"/>
<dbReference type="PDBsum" id="2B6F"/>
<dbReference type="PDBsum" id="2RII"/>
<dbReference type="PDBsum" id="3CYI"/>
<dbReference type="PDBsum" id="3HY2"/>
<dbReference type="PDBsum" id="7LJ1"/>
<dbReference type="BMRB" id="Q9BYN0"/>
<dbReference type="SMR" id="Q9BYN0"/>
<dbReference type="BioGRID" id="126716">
    <property type="interactions" value="50"/>
</dbReference>
<dbReference type="CORUM" id="Q9BYN0"/>
<dbReference type="DIP" id="DIP-59836N"/>
<dbReference type="FunCoup" id="Q9BYN0">
    <property type="interactions" value="257"/>
</dbReference>
<dbReference type="IntAct" id="Q9BYN0">
    <property type="interactions" value="7"/>
</dbReference>
<dbReference type="STRING" id="9606.ENSP00000371388"/>
<dbReference type="iPTMnet" id="Q9BYN0"/>
<dbReference type="PhosphoSitePlus" id="Q9BYN0"/>
<dbReference type="BioMuta" id="SRXN1"/>
<dbReference type="DMDM" id="30315944"/>
<dbReference type="jPOST" id="Q9BYN0"/>
<dbReference type="MassIVE" id="Q9BYN0"/>
<dbReference type="PaxDb" id="9606-ENSP00000371388"/>
<dbReference type="PeptideAtlas" id="Q9BYN0"/>
<dbReference type="ProteomicsDB" id="79670"/>
<dbReference type="Pumba" id="Q9BYN0"/>
<dbReference type="Antibodypedia" id="69340">
    <property type="antibodies" value="92 antibodies from 29 providers"/>
</dbReference>
<dbReference type="DNASU" id="140809"/>
<dbReference type="Ensembl" id="ENST00000381962.4">
    <property type="protein sequence ID" value="ENSP00000371388.4"/>
    <property type="gene ID" value="ENSG00000271303.2"/>
</dbReference>
<dbReference type="GeneID" id="140809"/>
<dbReference type="KEGG" id="hsa:140809"/>
<dbReference type="MANE-Select" id="ENST00000381962.4">
    <property type="protein sequence ID" value="ENSP00000371388.4"/>
    <property type="RefSeq nucleotide sequence ID" value="NM_080725.3"/>
    <property type="RefSeq protein sequence ID" value="NP_542763.1"/>
</dbReference>
<dbReference type="UCSC" id="uc002wea.5">
    <property type="organism name" value="human"/>
</dbReference>
<dbReference type="AGR" id="HGNC:16132"/>
<dbReference type="CTD" id="140809"/>
<dbReference type="DisGeNET" id="140809"/>
<dbReference type="GeneCards" id="SRXN1"/>
<dbReference type="HGNC" id="HGNC:16132">
    <property type="gene designation" value="SRXN1"/>
</dbReference>
<dbReference type="HPA" id="ENSG00000271303">
    <property type="expression patterns" value="Low tissue specificity"/>
</dbReference>
<dbReference type="MIM" id="617583">
    <property type="type" value="gene"/>
</dbReference>
<dbReference type="neXtProt" id="NX_Q9BYN0"/>
<dbReference type="OpenTargets" id="ENSG00000271303"/>
<dbReference type="PharmGKB" id="PA25681"/>
<dbReference type="VEuPathDB" id="HostDB:ENSG00000271303"/>
<dbReference type="eggNOG" id="KOG3388">
    <property type="taxonomic scope" value="Eukaryota"/>
</dbReference>
<dbReference type="GeneTree" id="ENSGT00390000007832"/>
<dbReference type="HOGENOM" id="CLU_124532_1_0_1"/>
<dbReference type="InParanoid" id="Q9BYN0"/>
<dbReference type="OMA" id="SQIRRPI"/>
<dbReference type="OrthoDB" id="10023328at2759"/>
<dbReference type="PAN-GO" id="Q9BYN0">
    <property type="GO annotations" value="3 GO annotations based on evolutionary models"/>
</dbReference>
<dbReference type="PhylomeDB" id="Q9BYN0"/>
<dbReference type="TreeFam" id="TF300230"/>
<dbReference type="BRENDA" id="1.8.98.2">
    <property type="organism ID" value="2681"/>
</dbReference>
<dbReference type="PathwayCommons" id="Q9BYN0"/>
<dbReference type="Reactome" id="R-HSA-9818027">
    <property type="pathway name" value="NFE2L2 regulating anti-oxidant/detoxification enzymes"/>
</dbReference>
<dbReference type="SignaLink" id="Q9BYN0"/>
<dbReference type="BioGRID-ORCS" id="140809">
    <property type="hits" value="18 hits in 1157 CRISPR screens"/>
</dbReference>
<dbReference type="ChiTaRS" id="SRXN1">
    <property type="organism name" value="human"/>
</dbReference>
<dbReference type="EvolutionaryTrace" id="Q9BYN0"/>
<dbReference type="GeneWiki" id="SRXN1"/>
<dbReference type="GenomeRNAi" id="140809"/>
<dbReference type="Pharos" id="Q9BYN0">
    <property type="development level" value="Tbio"/>
</dbReference>
<dbReference type="PRO" id="PR:Q9BYN0"/>
<dbReference type="Proteomes" id="UP000005640">
    <property type="component" value="Chromosome 20"/>
</dbReference>
<dbReference type="RNAct" id="Q9BYN0">
    <property type="molecule type" value="protein"/>
</dbReference>
<dbReference type="Bgee" id="ENSG00000271303">
    <property type="expression patterns" value="Expressed in islet of Langerhans and 96 other cell types or tissues"/>
</dbReference>
<dbReference type="GO" id="GO:0005737">
    <property type="term" value="C:cytoplasm"/>
    <property type="evidence" value="ECO:0000318"/>
    <property type="project" value="GO_Central"/>
</dbReference>
<dbReference type="GO" id="GO:0005829">
    <property type="term" value="C:cytosol"/>
    <property type="evidence" value="ECO:0000314"/>
    <property type="project" value="UniProtKB"/>
</dbReference>
<dbReference type="GO" id="GO:0005789">
    <property type="term" value="C:endoplasmic reticulum membrane"/>
    <property type="evidence" value="ECO:0000304"/>
    <property type="project" value="Reactome"/>
</dbReference>
<dbReference type="GO" id="GO:0005524">
    <property type="term" value="F:ATP binding"/>
    <property type="evidence" value="ECO:0007669"/>
    <property type="project" value="UniProtKB-KW"/>
</dbReference>
<dbReference type="GO" id="GO:0016667">
    <property type="term" value="F:oxidoreductase activity, acting on a sulfur group of donors"/>
    <property type="evidence" value="ECO:0000314"/>
    <property type="project" value="UniProtKB"/>
</dbReference>
<dbReference type="GO" id="GO:0032542">
    <property type="term" value="F:sulfiredoxin activity"/>
    <property type="evidence" value="ECO:0000318"/>
    <property type="project" value="GO_Central"/>
</dbReference>
<dbReference type="GO" id="GO:0034599">
    <property type="term" value="P:cellular response to oxidative stress"/>
    <property type="evidence" value="ECO:0000318"/>
    <property type="project" value="GO_Central"/>
</dbReference>
<dbReference type="GO" id="GO:0006979">
    <property type="term" value="P:response to oxidative stress"/>
    <property type="evidence" value="ECO:0000314"/>
    <property type="project" value="UniProtKB"/>
</dbReference>
<dbReference type="CDD" id="cd16395">
    <property type="entry name" value="Srx"/>
    <property type="match status" value="1"/>
</dbReference>
<dbReference type="FunFam" id="3.90.1530.10:FF:000001">
    <property type="entry name" value="Sulfiredoxin"/>
    <property type="match status" value="1"/>
</dbReference>
<dbReference type="Gene3D" id="3.90.1530.10">
    <property type="entry name" value="Conserved hypothetical protein from pyrococcus furiosus pfu- 392566-001, ParB domain"/>
    <property type="match status" value="1"/>
</dbReference>
<dbReference type="InterPro" id="IPR003115">
    <property type="entry name" value="ParB/Sulfiredoxin_dom"/>
</dbReference>
<dbReference type="InterPro" id="IPR036086">
    <property type="entry name" value="ParB/Sulfiredoxin_sf"/>
</dbReference>
<dbReference type="InterPro" id="IPR016692">
    <property type="entry name" value="Sulfiredoxin"/>
</dbReference>
<dbReference type="PANTHER" id="PTHR21348">
    <property type="match status" value="1"/>
</dbReference>
<dbReference type="PANTHER" id="PTHR21348:SF2">
    <property type="entry name" value="SULFIREDOXIN-1"/>
    <property type="match status" value="1"/>
</dbReference>
<dbReference type="PIRSF" id="PIRSF017267">
    <property type="entry name" value="Sulfiredoxin"/>
    <property type="match status" value="1"/>
</dbReference>
<dbReference type="SMART" id="SM00470">
    <property type="entry name" value="ParB"/>
    <property type="match status" value="1"/>
</dbReference>
<dbReference type="SUPFAM" id="SSF110849">
    <property type="entry name" value="ParB/Sulfiredoxin"/>
    <property type="match status" value="1"/>
</dbReference>
<proteinExistence type="evidence at protein level"/>
<evidence type="ECO:0000250" key="1">
    <source>
        <dbReference type="UniProtKB" id="P36077"/>
    </source>
</evidence>
<evidence type="ECO:0000256" key="2">
    <source>
        <dbReference type="SAM" id="MobiDB-lite"/>
    </source>
</evidence>
<evidence type="ECO:0000269" key="3">
    <source>
    </source>
</evidence>
<evidence type="ECO:0000269" key="4">
    <source>
    </source>
</evidence>
<evidence type="ECO:0000269" key="5">
    <source>
    </source>
</evidence>
<evidence type="ECO:0000305" key="6"/>
<evidence type="ECO:0007744" key="7">
    <source>
    </source>
</evidence>
<evidence type="ECO:0007744" key="8">
    <source>
    </source>
</evidence>
<evidence type="ECO:0007829" key="9">
    <source>
        <dbReference type="PDB" id="1XW3"/>
    </source>
</evidence>
<evidence type="ECO:0007829" key="10">
    <source>
        <dbReference type="PDB" id="1YZS"/>
    </source>
</evidence>
<keyword id="KW-0002">3D-structure</keyword>
<keyword id="KW-0049">Antioxidant</keyword>
<keyword id="KW-0067">ATP-binding</keyword>
<keyword id="KW-0963">Cytoplasm</keyword>
<keyword id="KW-1015">Disulfide bond</keyword>
<keyword id="KW-0460">Magnesium</keyword>
<keyword id="KW-0488">Methylation</keyword>
<keyword id="KW-0547">Nucleotide-binding</keyword>
<keyword id="KW-0560">Oxidoreductase</keyword>
<keyword id="KW-0597">Phosphoprotein</keyword>
<keyword id="KW-1267">Proteomics identification</keyword>
<keyword id="KW-1185">Reference proteome</keyword>
<reference key="1">
    <citation type="journal article" date="2004" name="Nat. Genet.">
        <title>Complete sequencing and characterization of 21,243 full-length human cDNAs.</title>
        <authorList>
            <person name="Ota T."/>
            <person name="Suzuki Y."/>
            <person name="Nishikawa T."/>
            <person name="Otsuki T."/>
            <person name="Sugiyama T."/>
            <person name="Irie R."/>
            <person name="Wakamatsu A."/>
            <person name="Hayashi K."/>
            <person name="Sato H."/>
            <person name="Nagai K."/>
            <person name="Kimura K."/>
            <person name="Makita H."/>
            <person name="Sekine M."/>
            <person name="Obayashi M."/>
            <person name="Nishi T."/>
            <person name="Shibahara T."/>
            <person name="Tanaka T."/>
            <person name="Ishii S."/>
            <person name="Yamamoto J."/>
            <person name="Saito K."/>
            <person name="Kawai Y."/>
            <person name="Isono Y."/>
            <person name="Nakamura Y."/>
            <person name="Nagahari K."/>
            <person name="Murakami K."/>
            <person name="Yasuda T."/>
            <person name="Iwayanagi T."/>
            <person name="Wagatsuma M."/>
            <person name="Shiratori A."/>
            <person name="Sudo H."/>
            <person name="Hosoiri T."/>
            <person name="Kaku Y."/>
            <person name="Kodaira H."/>
            <person name="Kondo H."/>
            <person name="Sugawara M."/>
            <person name="Takahashi M."/>
            <person name="Kanda K."/>
            <person name="Yokoi T."/>
            <person name="Furuya T."/>
            <person name="Kikkawa E."/>
            <person name="Omura Y."/>
            <person name="Abe K."/>
            <person name="Kamihara K."/>
            <person name="Katsuta N."/>
            <person name="Sato K."/>
            <person name="Tanikawa M."/>
            <person name="Yamazaki M."/>
            <person name="Ninomiya K."/>
            <person name="Ishibashi T."/>
            <person name="Yamashita H."/>
            <person name="Murakawa K."/>
            <person name="Fujimori K."/>
            <person name="Tanai H."/>
            <person name="Kimata M."/>
            <person name="Watanabe M."/>
            <person name="Hiraoka S."/>
            <person name="Chiba Y."/>
            <person name="Ishida S."/>
            <person name="Ono Y."/>
            <person name="Takiguchi S."/>
            <person name="Watanabe S."/>
            <person name="Yosida M."/>
            <person name="Hotuta T."/>
            <person name="Kusano J."/>
            <person name="Kanehori K."/>
            <person name="Takahashi-Fujii A."/>
            <person name="Hara H."/>
            <person name="Tanase T.-O."/>
            <person name="Nomura Y."/>
            <person name="Togiya S."/>
            <person name="Komai F."/>
            <person name="Hara R."/>
            <person name="Takeuchi K."/>
            <person name="Arita M."/>
            <person name="Imose N."/>
            <person name="Musashino K."/>
            <person name="Yuuki H."/>
            <person name="Oshima A."/>
            <person name="Sasaki N."/>
            <person name="Aotsuka S."/>
            <person name="Yoshikawa Y."/>
            <person name="Matsunawa H."/>
            <person name="Ichihara T."/>
            <person name="Shiohata N."/>
            <person name="Sano S."/>
            <person name="Moriya S."/>
            <person name="Momiyama H."/>
            <person name="Satoh N."/>
            <person name="Takami S."/>
            <person name="Terashima Y."/>
            <person name="Suzuki O."/>
            <person name="Nakagawa S."/>
            <person name="Senoh A."/>
            <person name="Mizoguchi H."/>
            <person name="Goto Y."/>
            <person name="Shimizu F."/>
            <person name="Wakebe H."/>
            <person name="Hishigaki H."/>
            <person name="Watanabe T."/>
            <person name="Sugiyama A."/>
            <person name="Takemoto M."/>
            <person name="Kawakami B."/>
            <person name="Yamazaki M."/>
            <person name="Watanabe K."/>
            <person name="Kumagai A."/>
            <person name="Itakura S."/>
            <person name="Fukuzumi Y."/>
            <person name="Fujimori Y."/>
            <person name="Komiyama M."/>
            <person name="Tashiro H."/>
            <person name="Tanigami A."/>
            <person name="Fujiwara T."/>
            <person name="Ono T."/>
            <person name="Yamada K."/>
            <person name="Fujii Y."/>
            <person name="Ozaki K."/>
            <person name="Hirao M."/>
            <person name="Ohmori Y."/>
            <person name="Kawabata A."/>
            <person name="Hikiji T."/>
            <person name="Kobatake N."/>
            <person name="Inagaki H."/>
            <person name="Ikema Y."/>
            <person name="Okamoto S."/>
            <person name="Okitani R."/>
            <person name="Kawakami T."/>
            <person name="Noguchi S."/>
            <person name="Itoh T."/>
            <person name="Shigeta K."/>
            <person name="Senba T."/>
            <person name="Matsumura K."/>
            <person name="Nakajima Y."/>
            <person name="Mizuno T."/>
            <person name="Morinaga M."/>
            <person name="Sasaki M."/>
            <person name="Togashi T."/>
            <person name="Oyama M."/>
            <person name="Hata H."/>
            <person name="Watanabe M."/>
            <person name="Komatsu T."/>
            <person name="Mizushima-Sugano J."/>
            <person name="Satoh T."/>
            <person name="Shirai Y."/>
            <person name="Takahashi Y."/>
            <person name="Nakagawa K."/>
            <person name="Okumura K."/>
            <person name="Nagase T."/>
            <person name="Nomura N."/>
            <person name="Kikuchi H."/>
            <person name="Masuho Y."/>
            <person name="Yamashita R."/>
            <person name="Nakai K."/>
            <person name="Yada T."/>
            <person name="Nakamura Y."/>
            <person name="Ohara O."/>
            <person name="Isogai T."/>
            <person name="Sugano S."/>
        </authorList>
    </citation>
    <scope>NUCLEOTIDE SEQUENCE [LARGE SCALE MRNA]</scope>
    <source>
        <tissue>Brain</tissue>
    </source>
</reference>
<reference key="2">
    <citation type="journal article" date="2007" name="BMC Genomics">
        <title>The full-ORF clone resource of the German cDNA consortium.</title>
        <authorList>
            <person name="Bechtel S."/>
            <person name="Rosenfelder H."/>
            <person name="Duda A."/>
            <person name="Schmidt C.P."/>
            <person name="Ernst U."/>
            <person name="Wellenreuther R."/>
            <person name="Mehrle A."/>
            <person name="Schuster C."/>
            <person name="Bahr A."/>
            <person name="Bloecker H."/>
            <person name="Heubner D."/>
            <person name="Hoerlein A."/>
            <person name="Michel G."/>
            <person name="Wedler H."/>
            <person name="Koehrer K."/>
            <person name="Ottenwaelder B."/>
            <person name="Poustka A."/>
            <person name="Wiemann S."/>
            <person name="Schupp I."/>
        </authorList>
    </citation>
    <scope>NUCLEOTIDE SEQUENCE [LARGE SCALE MRNA]</scope>
    <source>
        <tissue>Mammary cancer</tissue>
    </source>
</reference>
<reference key="3">
    <citation type="journal article" date="2001" name="Nature">
        <title>The DNA sequence and comparative analysis of human chromosome 20.</title>
        <authorList>
            <person name="Deloukas P."/>
            <person name="Matthews L.H."/>
            <person name="Ashurst J.L."/>
            <person name="Burton J."/>
            <person name="Gilbert J.G.R."/>
            <person name="Jones M."/>
            <person name="Stavrides G."/>
            <person name="Almeida J.P."/>
            <person name="Babbage A.K."/>
            <person name="Bagguley C.L."/>
            <person name="Bailey J."/>
            <person name="Barlow K.F."/>
            <person name="Bates K.N."/>
            <person name="Beard L.M."/>
            <person name="Beare D.M."/>
            <person name="Beasley O.P."/>
            <person name="Bird C.P."/>
            <person name="Blakey S.E."/>
            <person name="Bridgeman A.M."/>
            <person name="Brown A.J."/>
            <person name="Buck D."/>
            <person name="Burrill W.D."/>
            <person name="Butler A.P."/>
            <person name="Carder C."/>
            <person name="Carter N.P."/>
            <person name="Chapman J.C."/>
            <person name="Clamp M."/>
            <person name="Clark G."/>
            <person name="Clark L.N."/>
            <person name="Clark S.Y."/>
            <person name="Clee C.M."/>
            <person name="Clegg S."/>
            <person name="Cobley V.E."/>
            <person name="Collier R.E."/>
            <person name="Connor R.E."/>
            <person name="Corby N.R."/>
            <person name="Coulson A."/>
            <person name="Coville G.J."/>
            <person name="Deadman R."/>
            <person name="Dhami P.D."/>
            <person name="Dunn M."/>
            <person name="Ellington A.G."/>
            <person name="Frankland J.A."/>
            <person name="Fraser A."/>
            <person name="French L."/>
            <person name="Garner P."/>
            <person name="Grafham D.V."/>
            <person name="Griffiths C."/>
            <person name="Griffiths M.N.D."/>
            <person name="Gwilliam R."/>
            <person name="Hall R.E."/>
            <person name="Hammond S."/>
            <person name="Harley J.L."/>
            <person name="Heath P.D."/>
            <person name="Ho S."/>
            <person name="Holden J.L."/>
            <person name="Howden P.J."/>
            <person name="Huckle E."/>
            <person name="Hunt A.R."/>
            <person name="Hunt S.E."/>
            <person name="Jekosch K."/>
            <person name="Johnson C.M."/>
            <person name="Johnson D."/>
            <person name="Kay M.P."/>
            <person name="Kimberley A.M."/>
            <person name="King A."/>
            <person name="Knights A."/>
            <person name="Laird G.K."/>
            <person name="Lawlor S."/>
            <person name="Lehvaeslaiho M.H."/>
            <person name="Leversha M.A."/>
            <person name="Lloyd C."/>
            <person name="Lloyd D.M."/>
            <person name="Lovell J.D."/>
            <person name="Marsh V.L."/>
            <person name="Martin S.L."/>
            <person name="McConnachie L.J."/>
            <person name="McLay K."/>
            <person name="McMurray A.A."/>
            <person name="Milne S.A."/>
            <person name="Mistry D."/>
            <person name="Moore M.J.F."/>
            <person name="Mullikin J.C."/>
            <person name="Nickerson T."/>
            <person name="Oliver K."/>
            <person name="Parker A."/>
            <person name="Patel R."/>
            <person name="Pearce T.A.V."/>
            <person name="Peck A.I."/>
            <person name="Phillimore B.J.C.T."/>
            <person name="Prathalingam S.R."/>
            <person name="Plumb R.W."/>
            <person name="Ramsay H."/>
            <person name="Rice C.M."/>
            <person name="Ross M.T."/>
            <person name="Scott C.E."/>
            <person name="Sehra H.K."/>
            <person name="Shownkeen R."/>
            <person name="Sims S."/>
            <person name="Skuce C.D."/>
            <person name="Smith M.L."/>
            <person name="Soderlund C."/>
            <person name="Steward C.A."/>
            <person name="Sulston J.E."/>
            <person name="Swann R.M."/>
            <person name="Sycamore N."/>
            <person name="Taylor R."/>
            <person name="Tee L."/>
            <person name="Thomas D.W."/>
            <person name="Thorpe A."/>
            <person name="Tracey A."/>
            <person name="Tromans A.C."/>
            <person name="Vaudin M."/>
            <person name="Wall M."/>
            <person name="Wallis J.M."/>
            <person name="Whitehead S.L."/>
            <person name="Whittaker P."/>
            <person name="Willey D.L."/>
            <person name="Williams L."/>
            <person name="Williams S.A."/>
            <person name="Wilming L."/>
            <person name="Wray P.W."/>
            <person name="Hubbard T."/>
            <person name="Durbin R.M."/>
            <person name="Bentley D.R."/>
            <person name="Beck S."/>
            <person name="Rogers J."/>
        </authorList>
    </citation>
    <scope>NUCLEOTIDE SEQUENCE [LARGE SCALE GENOMIC DNA]</scope>
</reference>
<reference key="4">
    <citation type="journal article" date="2004" name="Genome Res.">
        <title>The status, quality, and expansion of the NIH full-length cDNA project: the Mammalian Gene Collection (MGC).</title>
        <authorList>
            <consortium name="The MGC Project Team"/>
        </authorList>
    </citation>
    <scope>NUCLEOTIDE SEQUENCE [LARGE SCALE MRNA]</scope>
    <source>
        <tissue>Kidney</tissue>
        <tissue>Lung</tissue>
        <tissue>Uterus</tissue>
    </source>
</reference>
<reference key="5">
    <citation type="journal article" date="2004" name="J. Biol. Chem.">
        <title>Characterization of mammalian sulfiredoxin and its reactivation of hyperoxidized peroxiredoxin through reduction of cysteine sulfinic acid in the active site to cysteine.</title>
        <authorList>
            <person name="Chang T.-S."/>
            <person name="Jeong W."/>
            <person name="Woo H.A."/>
            <person name="Lee S.M."/>
            <person name="Park S."/>
            <person name="Rhee S.G."/>
        </authorList>
    </citation>
    <scope>FUNCTION</scope>
    <scope>CATALYTIC ACTIVITY</scope>
    <scope>SUBCELLULAR LOCATION</scope>
    <scope>TISSUE SPECIFICITY</scope>
</reference>
<reference key="6">
    <citation type="journal article" date="2005" name="J. Biol. Chem.">
        <title>Reduction of cysteine sulfinic acid by sulfiredoxin is specific to 2-cys peroxiredoxins.</title>
        <authorList>
            <person name="Woo H.A."/>
            <person name="Jeong W."/>
            <person name="Chang T.-S."/>
            <person name="Park K.J."/>
            <person name="Park S.J."/>
            <person name="Yang J.S."/>
            <person name="Rhee S.G."/>
        </authorList>
    </citation>
    <scope>FUNCTION</scope>
    <scope>CATALYTIC ACTIVITY</scope>
    <scope>MUTAGENESIS OF CYS-99</scope>
</reference>
<reference key="7">
    <citation type="journal article" date="2011" name="BMC Syst. Biol.">
        <title>Initial characterization of the human central proteome.</title>
        <authorList>
            <person name="Burkard T.R."/>
            <person name="Planyavsky M."/>
            <person name="Kaupe I."/>
            <person name="Breitwieser F.P."/>
            <person name="Buerckstuemmer T."/>
            <person name="Bennett K.L."/>
            <person name="Superti-Furga G."/>
            <person name="Colinge J."/>
        </authorList>
    </citation>
    <scope>IDENTIFICATION BY MASS SPECTROMETRY [LARGE SCALE ANALYSIS]</scope>
</reference>
<reference key="8">
    <citation type="journal article" date="2013" name="J. Proteome Res.">
        <title>Toward a comprehensive characterization of a human cancer cell phosphoproteome.</title>
        <authorList>
            <person name="Zhou H."/>
            <person name="Di Palma S."/>
            <person name="Preisinger C."/>
            <person name="Peng M."/>
            <person name="Polat A.N."/>
            <person name="Heck A.J."/>
            <person name="Mohammed S."/>
        </authorList>
    </citation>
    <scope>PHOSPHORYLATION [LARGE SCALE ANALYSIS] AT SER-32</scope>
    <scope>IDENTIFICATION BY MASS SPECTROMETRY [LARGE SCALE ANALYSIS]</scope>
    <source>
        <tissue>Erythroleukemia</tissue>
    </source>
</reference>
<reference key="9">
    <citation type="journal article" date="2014" name="J. Proteomics">
        <title>An enzyme assisted RP-RPLC approach for in-depth analysis of human liver phosphoproteome.</title>
        <authorList>
            <person name="Bian Y."/>
            <person name="Song C."/>
            <person name="Cheng K."/>
            <person name="Dong M."/>
            <person name="Wang F."/>
            <person name="Huang J."/>
            <person name="Sun D."/>
            <person name="Wang L."/>
            <person name="Ye M."/>
            <person name="Zou H."/>
        </authorList>
    </citation>
    <scope>IDENTIFICATION BY MASS SPECTROMETRY [LARGE SCALE ANALYSIS]</scope>
    <source>
        <tissue>Liver</tissue>
    </source>
</reference>
<reference key="10">
    <citation type="journal article" date="2014" name="Mol. Cell. Proteomics">
        <title>Immunoaffinity enrichment and mass spectrometry analysis of protein methylation.</title>
        <authorList>
            <person name="Guo A."/>
            <person name="Gu H."/>
            <person name="Zhou J."/>
            <person name="Mulhern D."/>
            <person name="Wang Y."/>
            <person name="Lee K.A."/>
            <person name="Yang V."/>
            <person name="Aguiar M."/>
            <person name="Kornhauser J."/>
            <person name="Jia X."/>
            <person name="Ren J."/>
            <person name="Beausoleil S.A."/>
            <person name="Silva J.C."/>
            <person name="Vemulapalli V."/>
            <person name="Bedford M.T."/>
            <person name="Comb M.J."/>
        </authorList>
    </citation>
    <scope>METHYLATION [LARGE SCALE ANALYSIS] AT ARG-11 AND ARG-16</scope>
    <scope>IDENTIFICATION BY MASS SPECTROMETRY [LARGE SCALE ANALYSIS]</scope>
    <source>
        <tissue>Colon carcinoma</tissue>
    </source>
</reference>
<reference key="11">
    <citation type="submission" date="2004-02" db="PDB data bank">
        <title>Solution structure of human sulfiredoxin (SRX).</title>
        <authorList>
            <person name="Gruschus J.M."/>
            <person name="Lee D.Y."/>
            <person name="Ferretti J.A."/>
            <person name="Rhee S.G."/>
        </authorList>
    </citation>
    <scope>STRUCTURE BY NMR OF 17-137</scope>
</reference>
<reference key="12">
    <citation type="journal article" date="2005" name="Biochemistry">
        <title>Structural basis for the retroreduction of inactivated peroxiredoxins by human sulfiredoxin.</title>
        <authorList>
            <person name="Jonsson T.J."/>
            <person name="Murray M.S."/>
            <person name="Johnson L.C."/>
            <person name="Poole L.B."/>
            <person name="Lowther W.T."/>
        </authorList>
    </citation>
    <scope>X-RAY CRYSTALLOGRAPHY (1.65 ANGSTROMS) OF 32-137 IN COMPLEX WITH ADP</scope>
</reference>
<feature type="chain" id="PRO_0000211431" description="Sulfiredoxin-1">
    <location>
        <begin position="1"/>
        <end position="137"/>
    </location>
</feature>
<feature type="region of interest" description="Disordered" evidence="2">
    <location>
        <begin position="1"/>
        <end position="34"/>
    </location>
</feature>
<feature type="compositionally biased region" description="Gly residues" evidence="2">
    <location>
        <begin position="1"/>
        <end position="30"/>
    </location>
</feature>
<feature type="binding site" evidence="5">
    <location>
        <begin position="98"/>
        <end position="101"/>
    </location>
    <ligand>
        <name>ATP</name>
        <dbReference type="ChEBI" id="CHEBI:30616"/>
    </ligand>
</feature>
<feature type="modified residue" description="Omega-N-methylarginine" evidence="8">
    <location>
        <position position="11"/>
    </location>
</feature>
<feature type="modified residue" description="Omega-N-methylarginine" evidence="8">
    <location>
        <position position="16"/>
    </location>
</feature>
<feature type="modified residue" description="Phosphoserine" evidence="7">
    <location>
        <position position="32"/>
    </location>
</feature>
<feature type="disulfide bond" description="Interchain" evidence="1">
    <location>
        <position position="99"/>
    </location>
</feature>
<feature type="mutagenesis site" description="No effect on association with PRDX1, PRDX2, PRDX3 or PRDX4." evidence="4">
    <original>C</original>
    <variation>S</variation>
    <location>
        <position position="99"/>
    </location>
</feature>
<feature type="strand" evidence="10">
    <location>
        <begin position="22"/>
        <end position="24"/>
    </location>
</feature>
<feature type="strand" evidence="10">
    <location>
        <begin position="26"/>
        <end position="28"/>
    </location>
</feature>
<feature type="strand" evidence="9">
    <location>
        <begin position="39"/>
        <end position="45"/>
    </location>
</feature>
<feature type="helix" evidence="9">
    <location>
        <begin position="46"/>
        <end position="48"/>
    </location>
</feature>
<feature type="helix" evidence="9">
    <location>
        <begin position="59"/>
        <end position="71"/>
    </location>
</feature>
<feature type="helix" evidence="9">
    <location>
        <begin position="73"/>
        <end position="75"/>
    </location>
</feature>
<feature type="strand" evidence="9">
    <location>
        <begin position="79"/>
        <end position="85"/>
    </location>
</feature>
<feature type="strand" evidence="9">
    <location>
        <begin position="91"/>
        <end position="94"/>
    </location>
</feature>
<feature type="helix" evidence="9">
    <location>
        <begin position="99"/>
        <end position="107"/>
    </location>
</feature>
<feature type="strand" evidence="9">
    <location>
        <begin position="111"/>
        <end position="120"/>
    </location>
</feature>
<feature type="helix" evidence="9">
    <location>
        <begin position="122"/>
        <end position="129"/>
    </location>
</feature>
<feature type="helix" evidence="9">
    <location>
        <begin position="130"/>
        <end position="132"/>
    </location>
</feature>
<organism>
    <name type="scientific">Homo sapiens</name>
    <name type="common">Human</name>
    <dbReference type="NCBI Taxonomy" id="9606"/>
    <lineage>
        <taxon>Eukaryota</taxon>
        <taxon>Metazoa</taxon>
        <taxon>Chordata</taxon>
        <taxon>Craniata</taxon>
        <taxon>Vertebrata</taxon>
        <taxon>Euteleostomi</taxon>
        <taxon>Mammalia</taxon>
        <taxon>Eutheria</taxon>
        <taxon>Euarchontoglires</taxon>
        <taxon>Primates</taxon>
        <taxon>Haplorrhini</taxon>
        <taxon>Catarrhini</taxon>
        <taxon>Hominidae</taxon>
        <taxon>Homo</taxon>
    </lineage>
</organism>
<sequence>MGLRAGGTLGRAGAGRGAPEGPGPSGGAQGGSIHSGRIAAVHNVPLSVLIRPLPSVLDPAKVQSLVDTIREDPDSVPPIDVLWIKGAQGGDYFYSFGGCHRYAAYQQLQRETIPAKLVQSTLSDLRVYLGASTPDLQ</sequence>